<comment type="function">
    <text evidence="3 6">Plays a role in pre-mRNA splicing as a core component of the spliceosomal U1, U2, U4 and U5 small nuclear ribonucleoproteins (snRNPs), the building blocks of the spliceosome. Also binds telomerase RNA and is required for its accumulation.</text>
</comment>
<comment type="subunit">
    <text evidence="2 4 5 7">Component of the Sm core complex, present in spliceosomal snRNP U1, U2, U4/U6 and U5. The core complex contains SMB1, SMD1, SMD2, SMD3, SME1, SMX3 and SMX2 (Sm proteins B, D1, D2, D3, E, F and G, respectively), and is probably a heptameric ring structure. SMD3 specifically interacts with SMB1. Belongs to the CWC complex (or CEF1-associated complex), a spliceosome sub-complex reminiscent of a late-stage spliceosome composed of the U2, U5 and U6 snRNAs and at least BUD13, BUD31, BRR2, CDC40, CEF1, CLF1, CUS1, CWC2, CWC15, CWC21, CWC22, CWC23, CWC24, CWC25, CWC27, ECM2, HSH155, IST3, ISY1, LEA1, MSL1, NTC20, PRP8, PRP9, PRP11, PRP19, PRP21, PRP22, PRP45, PRP46, SLU7, SMB1, SMD1, SMD2, SMD3, SMX2, SMX3, SNT309, SNU114, SPP2, SYF1, SYF2, RSE1 and YJU2. Component of the U4/U6-U5 tri-snRNP complex composed of the U4, U6 and U5 snRNAs and at least PRP3, PRP4, PRP6, PRP8, PRP18, PRP31, PRP38, SNU13, SNU23, SNU66, SNU114, SPP381, SMB1, SMD1, SMD2, SMD3, SMX2, SMX3, LSM2, LSM3, LSM4, LSM5, LSM6, LSM7, LSM8, BRR2 and DIB1.</text>
</comment>
<comment type="interaction">
    <interactant intactId="EBI-529">
        <id>P43321</id>
    </interactant>
    <interactant intactId="EBI-432">
        <id>P40018</id>
        <label>SMB1</label>
    </interactant>
    <organismsDiffer>false</organismsDiffer>
    <experiments>4</experiments>
</comment>
<comment type="subcellular location">
    <subcellularLocation>
        <location evidence="6">Cytoplasm</location>
        <location evidence="6">Cytosol</location>
    </subcellularLocation>
    <subcellularLocation>
        <location evidence="6">Nucleus</location>
    </subcellularLocation>
</comment>
<comment type="similarity">
    <text evidence="8">Belongs to the snRNP core protein family.</text>
</comment>
<protein>
    <recommendedName>
        <fullName>Small nuclear ribonucleoprotein Sm D3</fullName>
        <shortName>Sm-D3</shortName>
    </recommendedName>
    <alternativeName>
        <fullName>snRNP core protein D3</fullName>
    </alternativeName>
</protein>
<feature type="chain" id="PRO_0000122220" description="Small nuclear ribonucleoprotein Sm D3">
    <location>
        <begin position="1"/>
        <end position="101"/>
    </location>
</feature>
<feature type="domain" description="Sm" evidence="1">
    <location>
        <begin position="6"/>
        <end position="78"/>
    </location>
</feature>
<feature type="sequence conflict" description="In Ref. 7; AAS56859." evidence="8" ref="7">
    <original>S</original>
    <variation>P</variation>
    <location>
        <position position="88"/>
    </location>
</feature>
<feature type="helix" evidence="10">
    <location>
        <begin position="6"/>
        <end position="13"/>
    </location>
</feature>
<feature type="turn" evidence="10">
    <location>
        <begin position="14"/>
        <end position="16"/>
    </location>
</feature>
<feature type="strand" evidence="10">
    <location>
        <begin position="17"/>
        <end position="23"/>
    </location>
</feature>
<feature type="strand" evidence="10">
    <location>
        <begin position="28"/>
        <end position="36"/>
    </location>
</feature>
<feature type="strand" evidence="10">
    <location>
        <begin position="42"/>
        <end position="50"/>
    </location>
</feature>
<feature type="strand" evidence="9">
    <location>
        <begin position="52"/>
        <end position="54"/>
    </location>
</feature>
<feature type="strand" evidence="10">
    <location>
        <begin position="56"/>
        <end position="64"/>
    </location>
</feature>
<feature type="helix" evidence="10">
    <location>
        <begin position="66"/>
        <end position="68"/>
    </location>
</feature>
<feature type="strand" evidence="10">
    <location>
        <begin position="69"/>
        <end position="73"/>
    </location>
</feature>
<feature type="helix" evidence="10">
    <location>
        <begin position="76"/>
        <end position="80"/>
    </location>
</feature>
<feature type="helix" evidence="10">
    <location>
        <begin position="82"/>
        <end position="84"/>
    </location>
</feature>
<name>SMD3_YEAST</name>
<keyword id="KW-0002">3D-structure</keyword>
<keyword id="KW-0963">Cytoplasm</keyword>
<keyword id="KW-0903">Direct protein sequencing</keyword>
<keyword id="KW-0507">mRNA processing</keyword>
<keyword id="KW-0508">mRNA splicing</keyword>
<keyword id="KW-0539">Nucleus</keyword>
<keyword id="KW-1185">Reference proteome</keyword>
<keyword id="KW-0687">Ribonucleoprotein</keyword>
<keyword id="KW-0694">RNA-binding</keyword>
<accession>P43321</accession>
<accession>D6VYE2</accession>
<accession>E9P8W3</accession>
<reference key="1">
    <citation type="journal article" date="1991" name="Mol. Cell. Biol.">
        <title>Isolation and characterization of PEP3, a gene required for vacuolar biogenesis in Saccharomyces cerevisiae.</title>
        <authorList>
            <person name="Preston R."/>
            <person name="Manolson M.F."/>
            <person name="Becherer K."/>
            <person name="Weindnhammer E."/>
            <person name="Kirkpatrick D."/>
            <person name="Wright R."/>
            <person name="Jones E.W."/>
        </authorList>
    </citation>
    <scope>NUCLEOTIDE SEQUENCE [GENOMIC DNA]</scope>
</reference>
<reference key="2">
    <citation type="journal article" date="1991" name="Mol. Cell. Biol.">
        <title>A putative zinc finger protein, Saccharomyces cerevisiae Vps18p, affects late Golgi functions required for vacuolar protein sorting and efficient alpha-factor prohormone maturation.</title>
        <authorList>
            <person name="Robinson J.S."/>
            <person name="Graham T.R."/>
            <person name="Emr S.D."/>
        </authorList>
    </citation>
    <scope>NUCLEOTIDE SEQUENCE [GENOMIC DNA]</scope>
</reference>
<reference key="3">
    <citation type="journal article" date="1998" name="Mol. Cell. Biol.">
        <title>Interactions within the yeast Sm core complex: from proteins to amino acids.</title>
        <authorList>
            <person name="Camasses A."/>
            <person name="Bragado-Nilsson E."/>
            <person name="Martin R."/>
            <person name="Seraphin B."/>
            <person name="Bordonne R."/>
        </authorList>
    </citation>
    <scope>NUCLEOTIDE SEQUENCE [GENOMIC DNA]</scope>
    <scope>INTERACTION WITH SMB1</scope>
</reference>
<reference key="4">
    <citation type="journal article" date="1999" name="EMBO J.">
        <title>Sm and Sm-like proteins assemble in two related complexes of deep evolutionary origin.</title>
        <authorList>
            <person name="Salgado-Garrido J."/>
            <person name="Bragado-Nilsson E."/>
            <person name="Kandels-Lewis S."/>
            <person name="Seraphin B."/>
        </authorList>
    </citation>
    <scope>NUCLEOTIDE SEQUENCE [GENOMIC DNA]</scope>
    <scope>RNA-BINDING</scope>
</reference>
<reference key="5">
    <citation type="journal article" date="1997" name="Nature">
        <title>The nucleotide sequence of Saccharomyces cerevisiae chromosome XII.</title>
        <authorList>
            <person name="Johnston M."/>
            <person name="Hillier L.W."/>
            <person name="Riles L."/>
            <person name="Albermann K."/>
            <person name="Andre B."/>
            <person name="Ansorge W."/>
            <person name="Benes V."/>
            <person name="Brueckner M."/>
            <person name="Delius H."/>
            <person name="Dubois E."/>
            <person name="Duesterhoeft A."/>
            <person name="Entian K.-D."/>
            <person name="Floeth M."/>
            <person name="Goffeau A."/>
            <person name="Hebling U."/>
            <person name="Heumann K."/>
            <person name="Heuss-Neitzel D."/>
            <person name="Hilbert H."/>
            <person name="Hilger F."/>
            <person name="Kleine K."/>
            <person name="Koetter P."/>
            <person name="Louis E.J."/>
            <person name="Messenguy F."/>
            <person name="Mewes H.-W."/>
            <person name="Miosga T."/>
            <person name="Moestl D."/>
            <person name="Mueller-Auer S."/>
            <person name="Nentwich U."/>
            <person name="Obermaier B."/>
            <person name="Piravandi E."/>
            <person name="Pohl T.M."/>
            <person name="Portetelle D."/>
            <person name="Purnelle B."/>
            <person name="Rechmann S."/>
            <person name="Rieger M."/>
            <person name="Rinke M."/>
            <person name="Rose M."/>
            <person name="Scharfe M."/>
            <person name="Scherens B."/>
            <person name="Scholler P."/>
            <person name="Schwager C."/>
            <person name="Schwarz S."/>
            <person name="Underwood A.P."/>
            <person name="Urrestarazu L.A."/>
            <person name="Vandenbol M."/>
            <person name="Verhasselt P."/>
            <person name="Vierendeels F."/>
            <person name="Voet M."/>
            <person name="Volckaert G."/>
            <person name="Voss H."/>
            <person name="Wambutt R."/>
            <person name="Wedler E."/>
            <person name="Wedler H."/>
            <person name="Zimmermann F.K."/>
            <person name="Zollner A."/>
            <person name="Hani J."/>
            <person name="Hoheisel J.D."/>
        </authorList>
    </citation>
    <scope>NUCLEOTIDE SEQUENCE [LARGE SCALE GENOMIC DNA]</scope>
    <source>
        <strain>ATCC 204508 / S288c</strain>
    </source>
</reference>
<reference key="6">
    <citation type="journal article" date="2014" name="G3 (Bethesda)">
        <title>The reference genome sequence of Saccharomyces cerevisiae: Then and now.</title>
        <authorList>
            <person name="Engel S.R."/>
            <person name="Dietrich F.S."/>
            <person name="Fisk D.G."/>
            <person name="Binkley G."/>
            <person name="Balakrishnan R."/>
            <person name="Costanzo M.C."/>
            <person name="Dwight S.S."/>
            <person name="Hitz B.C."/>
            <person name="Karra K."/>
            <person name="Nash R.S."/>
            <person name="Weng S."/>
            <person name="Wong E.D."/>
            <person name="Lloyd P."/>
            <person name="Skrzypek M.S."/>
            <person name="Miyasato S.R."/>
            <person name="Simison M."/>
            <person name="Cherry J.M."/>
        </authorList>
    </citation>
    <scope>GENOME REANNOTATION</scope>
    <source>
        <strain>ATCC 204508 / S288c</strain>
    </source>
</reference>
<reference key="7">
    <citation type="journal article" date="2007" name="Genome Res.">
        <title>Approaching a complete repository of sequence-verified protein-encoding clones for Saccharomyces cerevisiae.</title>
        <authorList>
            <person name="Hu Y."/>
            <person name="Rolfs A."/>
            <person name="Bhullar B."/>
            <person name="Murthy T.V.S."/>
            <person name="Zhu C."/>
            <person name="Berger M.F."/>
            <person name="Camargo A.A."/>
            <person name="Kelley F."/>
            <person name="McCarron S."/>
            <person name="Jepson D."/>
            <person name="Richardson A."/>
            <person name="Raphael J."/>
            <person name="Moreira D."/>
            <person name="Taycher E."/>
            <person name="Zuo D."/>
            <person name="Mohr S."/>
            <person name="Kane M.F."/>
            <person name="Williamson J."/>
            <person name="Simpson A.J.G."/>
            <person name="Bulyk M.L."/>
            <person name="Harlow E."/>
            <person name="Marsischky G."/>
            <person name="Kolodner R.D."/>
            <person name="LaBaer J."/>
        </authorList>
    </citation>
    <scope>NUCLEOTIDE SEQUENCE [GENOMIC DNA]</scope>
    <source>
        <strain>ATCC 204508 / S288c</strain>
    </source>
</reference>
<reference key="8">
    <citation type="journal article" date="1997" name="Proc. Natl. Acad. Sci. U.S.A.">
        <title>Identification of the proteins of the yeast U1 small nuclear ribonucleoprotein complex by mass spectrometry.</title>
        <authorList>
            <person name="Neubauer G."/>
            <person name="Gottschalk A."/>
            <person name="Fabrizio P."/>
            <person name="Seraphin B."/>
            <person name="Luehrmann R."/>
            <person name="Mann M."/>
        </authorList>
    </citation>
    <scope>PARTIAL PROTEIN SEQUENCE</scope>
</reference>
<reference key="9">
    <citation type="journal article" date="1994" name="Proc. Natl. Acad. Sci. U.S.A.">
        <title>cDNA cloning of the Sm proteins D2 and D3 from human small nuclear ribonucleoproteins: evidence for a direct D1-D2 interaction.</title>
        <authorList>
            <person name="Lehmeier T."/>
            <person name="Raker V."/>
            <person name="Hermann H."/>
            <person name="Luehrmann R."/>
        </authorList>
    </citation>
    <scope>IDENTIFICATION</scope>
</reference>
<reference key="10">
    <citation type="journal article" date="1995" name="Mol. Cell. Biol.">
        <title>Structurally related but functionally distinct yeast Sm D core small nuclear ribonucleoprotein particle proteins.</title>
        <authorList>
            <person name="Roy J."/>
            <person name="Zheng B."/>
            <person name="Rymond B.C."/>
            <person name="Woolford J.L. Jr."/>
        </authorList>
    </citation>
    <scope>IDENTIFICATION</scope>
    <scope>FUNCTION</scope>
    <scope>SUBCELLULAR LOCATION</scope>
</reference>
<reference key="11">
    <citation type="journal article" date="1999" name="EMBO J.">
        <title>Identification by mass spectrometry and functional analysis of novel proteins of the yeast [U4/U6.U5] tri-snRNP.</title>
        <authorList>
            <person name="Gottschalk A."/>
            <person name="Neubauer G."/>
            <person name="Banroques J."/>
            <person name="Mann M."/>
            <person name="Luehrmann R."/>
            <person name="Fabrizio P."/>
        </authorList>
    </citation>
    <scope>SUBUNIT</scope>
    <scope>IDENTIFICATION IN THE U4/U5/U6 TRI-SNRNP COMPLEX</scope>
    <scope>IDENTIFICATION BY MASS SPECTROMETRY</scope>
</reference>
<reference key="12">
    <citation type="journal article" date="1999" name="Nature">
        <title>Saccharomyces cerevisiae telomerase is an Sm small nuclear ribonucleoprotein particle.</title>
        <authorList>
            <person name="Seto A.G."/>
            <person name="Zaug A.J."/>
            <person name="Sobel S.G."/>
            <person name="Wolin S.L."/>
            <person name="Cech T.R."/>
        </authorList>
    </citation>
    <scope>FUNCTION</scope>
</reference>
<reference key="13">
    <citation type="journal article" date="2001" name="J. Mol. Biol.">
        <title>Stoichiometry of the Sm proteins in yeast spliceosomal snRNPs supports the heptamer ring model of the core domain.</title>
        <authorList>
            <person name="Walke S."/>
            <person name="Bragado-Nilsson E."/>
            <person name="Seraphin B."/>
            <person name="Nagai K."/>
        </authorList>
    </citation>
    <scope>SUBUNIT</scope>
</reference>
<reference key="14">
    <citation type="journal article" date="2002" name="Mol. Cell">
        <title>Composition and functional characterization of the yeast spliceosomal penta-snRNP.</title>
        <authorList>
            <person name="Stevens S.W."/>
            <person name="Ryan D.E."/>
            <person name="Ge H.Y."/>
            <person name="Moore R.E."/>
            <person name="Young M.K."/>
            <person name="Lee T.D."/>
            <person name="Abelson J."/>
        </authorList>
    </citation>
    <scope>CHARACTERIZATION OF THE SPLICEOSOME</scope>
</reference>
<reference key="15">
    <citation type="journal article" date="2002" name="Mol. Cell. Biol.">
        <title>Proteomics analysis reveals stable multiprotein complexes in both fission and budding yeasts containing Myb-related Cdc5p/Cef1p, novel pre-mRNA splicing factors, and snRNAs.</title>
        <authorList>
            <person name="Ohi M.D."/>
            <person name="Link A.J."/>
            <person name="Ren L."/>
            <person name="Jennings J.L."/>
            <person name="McDonald W.H."/>
            <person name="Gould K.L."/>
        </authorList>
    </citation>
    <scope>IDENTIFICATION IN THE CWC COMPLEX</scope>
    <scope>IDENTIFICATION BY MASS SPECTROMETRY</scope>
</reference>
<reference key="16">
    <citation type="journal article" date="2003" name="Mol. Cell">
        <title>Assigning function to yeast proteins by integration of technologies.</title>
        <authorList>
            <person name="Hazbun T.R."/>
            <person name="Malmstroem L."/>
            <person name="Anderson S."/>
            <person name="Graczyk B.J."/>
            <person name="Fox B."/>
            <person name="Riffle M."/>
            <person name="Sundin B.A."/>
            <person name="Aranda J.D."/>
            <person name="McDonald W.H."/>
            <person name="Chiu C.-H."/>
            <person name="Snydsman B.E."/>
            <person name="Bradley P."/>
            <person name="Muller E.G.D."/>
            <person name="Fields S."/>
            <person name="Baker D."/>
            <person name="Yates J.R. III"/>
            <person name="Davis T.N."/>
        </authorList>
    </citation>
    <scope>IDENTIFICATION BY MASS SPECTROMETRY</scope>
</reference>
<proteinExistence type="evidence at protein level"/>
<sequence length="101" mass="11224">MTMNGIPVKLLNEAQGHIVSLELTTGATYRGKLVESEDSMNVQLRDVIATEPQGAVTHMDQIFVRGSQIKFIVVPDLLKNAPLFKKNSSRPMPPIRGPKRR</sequence>
<gene>
    <name type="primary">SMD3</name>
    <name type="ordered locus">YLR147C</name>
    <name type="ORF">L9634.6</name>
</gene>
<dbReference type="EMBL" id="M65144">
    <property type="status" value="NOT_ANNOTATED_CDS"/>
    <property type="molecule type" value="Genomic_DNA"/>
</dbReference>
<dbReference type="EMBL" id="Z73319">
    <property type="protein sequence ID" value="CAA97719.1"/>
    <property type="molecule type" value="Genomic_DNA"/>
</dbReference>
<dbReference type="EMBL" id="U53879">
    <property type="protein sequence ID" value="AAB82381.1"/>
    <property type="molecule type" value="Genomic_DNA"/>
</dbReference>
<dbReference type="EMBL" id="AY558533">
    <property type="protein sequence ID" value="AAS56859.1"/>
    <property type="molecule type" value="Genomic_DNA"/>
</dbReference>
<dbReference type="EMBL" id="BK006945">
    <property type="protein sequence ID" value="DAA09458.1"/>
    <property type="molecule type" value="Genomic_DNA"/>
</dbReference>
<dbReference type="PIR" id="S29093">
    <property type="entry name" value="S29093"/>
</dbReference>
<dbReference type="RefSeq" id="NP_013248.1">
    <property type="nucleotide sequence ID" value="NM_001182034.1"/>
</dbReference>
<dbReference type="PDB" id="3JCM">
    <property type="method" value="EM"/>
    <property type="resolution" value="3.80 A"/>
    <property type="chains" value="J/R=1-101"/>
</dbReference>
<dbReference type="PDB" id="5GAM">
    <property type="method" value="EM"/>
    <property type="resolution" value="3.70 A"/>
    <property type="chains" value="d=1-101"/>
</dbReference>
<dbReference type="PDB" id="5GAN">
    <property type="method" value="EM"/>
    <property type="resolution" value="3.60 A"/>
    <property type="chains" value="d/n=1-101"/>
</dbReference>
<dbReference type="PDB" id="5GAO">
    <property type="method" value="EM"/>
    <property type="resolution" value="3.60 A"/>
    <property type="chains" value="n=1-101"/>
</dbReference>
<dbReference type="PDB" id="5GM6">
    <property type="method" value="EM"/>
    <property type="resolution" value="3.50 A"/>
    <property type="chains" value="l=1-101"/>
</dbReference>
<dbReference type="PDB" id="5GMK">
    <property type="method" value="EM"/>
    <property type="resolution" value="3.40 A"/>
    <property type="chains" value="l/y=1-101"/>
</dbReference>
<dbReference type="PDB" id="5LJ3">
    <property type="method" value="EM"/>
    <property type="resolution" value="3.80 A"/>
    <property type="chains" value="d/n=1-101"/>
</dbReference>
<dbReference type="PDB" id="5LJ5">
    <property type="method" value="EM"/>
    <property type="resolution" value="3.80 A"/>
    <property type="chains" value="d/n=1-101"/>
</dbReference>
<dbReference type="PDB" id="5LQW">
    <property type="method" value="EM"/>
    <property type="resolution" value="5.80 A"/>
    <property type="chains" value="d=1-101"/>
</dbReference>
<dbReference type="PDB" id="5MPS">
    <property type="method" value="EM"/>
    <property type="resolution" value="3.85 A"/>
    <property type="chains" value="d=1-101"/>
</dbReference>
<dbReference type="PDB" id="5MQ0">
    <property type="method" value="EM"/>
    <property type="resolution" value="4.17 A"/>
    <property type="chains" value="d/n=1-101"/>
</dbReference>
<dbReference type="PDB" id="5NRL">
    <property type="method" value="EM"/>
    <property type="resolution" value="7.20 A"/>
    <property type="chains" value="d/n/v=1-101"/>
</dbReference>
<dbReference type="PDB" id="5WSG">
    <property type="method" value="EM"/>
    <property type="resolution" value="4.00 A"/>
    <property type="chains" value="U/l=1-101"/>
</dbReference>
<dbReference type="PDB" id="5Y88">
    <property type="method" value="EM"/>
    <property type="resolution" value="3.70 A"/>
    <property type="chains" value="e/l=1-101"/>
</dbReference>
<dbReference type="PDB" id="5YLZ">
    <property type="method" value="EM"/>
    <property type="resolution" value="3.60 A"/>
    <property type="chains" value="e/l=1-101"/>
</dbReference>
<dbReference type="PDB" id="5ZWM">
    <property type="method" value="EM"/>
    <property type="resolution" value="3.40 A"/>
    <property type="chains" value="S/d/l=1-101"/>
</dbReference>
<dbReference type="PDB" id="5ZWN">
    <property type="method" value="EM"/>
    <property type="resolution" value="3.30 A"/>
    <property type="chains" value="d=1-101"/>
</dbReference>
<dbReference type="PDB" id="5ZWO">
    <property type="method" value="EM"/>
    <property type="resolution" value="3.90 A"/>
    <property type="chains" value="S/d/l=1-101"/>
</dbReference>
<dbReference type="PDB" id="6BK8">
    <property type="method" value="EM"/>
    <property type="resolution" value="3.30 A"/>
    <property type="chains" value="g/o=1-101"/>
</dbReference>
<dbReference type="PDB" id="6EXN">
    <property type="method" value="EM"/>
    <property type="resolution" value="3.70 A"/>
    <property type="chains" value="d/n=1-101"/>
</dbReference>
<dbReference type="PDB" id="6G90">
    <property type="method" value="EM"/>
    <property type="resolution" value="4.00 A"/>
    <property type="chains" value="d/v=1-101"/>
</dbReference>
<dbReference type="PDB" id="6J6G">
    <property type="method" value="EM"/>
    <property type="resolution" value="3.20 A"/>
    <property type="chains" value="l/y=1-101"/>
</dbReference>
<dbReference type="PDB" id="6J6H">
    <property type="method" value="EM"/>
    <property type="resolution" value="3.60 A"/>
    <property type="chains" value="l/y=1-101"/>
</dbReference>
<dbReference type="PDB" id="6J6N">
    <property type="method" value="EM"/>
    <property type="resolution" value="3.86 A"/>
    <property type="chains" value="l/y=1-101"/>
</dbReference>
<dbReference type="PDB" id="6J6Q">
    <property type="method" value="EM"/>
    <property type="resolution" value="3.70 A"/>
    <property type="chains" value="l/y=1-101"/>
</dbReference>
<dbReference type="PDB" id="6N7P">
    <property type="method" value="EM"/>
    <property type="resolution" value="3.60 A"/>
    <property type="chains" value="N=1-101"/>
</dbReference>
<dbReference type="PDB" id="6N7R">
    <property type="method" value="EM"/>
    <property type="resolution" value="3.20 A"/>
    <property type="chains" value="N=1-101"/>
</dbReference>
<dbReference type="PDB" id="6N7X">
    <property type="method" value="EM"/>
    <property type="resolution" value="3.60 A"/>
    <property type="chains" value="N=1-101"/>
</dbReference>
<dbReference type="PDB" id="7B9V">
    <property type="method" value="EM"/>
    <property type="resolution" value="2.80 A"/>
    <property type="chains" value="d/n=1-101"/>
</dbReference>
<dbReference type="PDB" id="7OQB">
    <property type="method" value="EM"/>
    <property type="resolution" value="9.00 A"/>
    <property type="chains" value="v=1-101"/>
</dbReference>
<dbReference type="PDB" id="7OQC">
    <property type="method" value="EM"/>
    <property type="resolution" value="4.10 A"/>
    <property type="chains" value="d=1-101"/>
</dbReference>
<dbReference type="PDB" id="7OQE">
    <property type="method" value="EM"/>
    <property type="resolution" value="5.90 A"/>
    <property type="chains" value="d/v=1-101"/>
</dbReference>
<dbReference type="PDB" id="8W2O">
    <property type="method" value="EM"/>
    <property type="resolution" value="3.49 A"/>
    <property type="chains" value="N=1-101"/>
</dbReference>
<dbReference type="PDB" id="9DTR">
    <property type="method" value="EM"/>
    <property type="resolution" value="2.31 A"/>
    <property type="chains" value="d/n=1-101"/>
</dbReference>
<dbReference type="PDBsum" id="3JCM"/>
<dbReference type="PDBsum" id="5GAM"/>
<dbReference type="PDBsum" id="5GAN"/>
<dbReference type="PDBsum" id="5GAO"/>
<dbReference type="PDBsum" id="5GM6"/>
<dbReference type="PDBsum" id="5GMK"/>
<dbReference type="PDBsum" id="5LJ3"/>
<dbReference type="PDBsum" id="5LJ5"/>
<dbReference type="PDBsum" id="5LQW"/>
<dbReference type="PDBsum" id="5MPS"/>
<dbReference type="PDBsum" id="5MQ0"/>
<dbReference type="PDBsum" id="5NRL"/>
<dbReference type="PDBsum" id="5WSG"/>
<dbReference type="PDBsum" id="5Y88"/>
<dbReference type="PDBsum" id="5YLZ"/>
<dbReference type="PDBsum" id="5ZWM"/>
<dbReference type="PDBsum" id="5ZWN"/>
<dbReference type="PDBsum" id="5ZWO"/>
<dbReference type="PDBsum" id="6BK8"/>
<dbReference type="PDBsum" id="6EXN"/>
<dbReference type="PDBsum" id="6G90"/>
<dbReference type="PDBsum" id="6J6G"/>
<dbReference type="PDBsum" id="6J6H"/>
<dbReference type="PDBsum" id="6J6N"/>
<dbReference type="PDBsum" id="6J6Q"/>
<dbReference type="PDBsum" id="6N7P"/>
<dbReference type="PDBsum" id="6N7R"/>
<dbReference type="PDBsum" id="6N7X"/>
<dbReference type="PDBsum" id="7B9V"/>
<dbReference type="PDBsum" id="7OQB"/>
<dbReference type="PDBsum" id="7OQC"/>
<dbReference type="PDBsum" id="7OQE"/>
<dbReference type="PDBsum" id="8W2O"/>
<dbReference type="PDBsum" id="9DTR"/>
<dbReference type="EMDB" id="EMD-0360"/>
<dbReference type="EMDB" id="EMD-0361"/>
<dbReference type="EMDB" id="EMD-0686"/>
<dbReference type="EMDB" id="EMD-0687"/>
<dbReference type="EMDB" id="EMD-0691"/>
<dbReference type="EMDB" id="EMD-0692"/>
<dbReference type="EMDB" id="EMD-12106"/>
<dbReference type="EMDB" id="EMD-13028"/>
<dbReference type="EMDB" id="EMD-13029"/>
<dbReference type="EMDB" id="EMD-13033"/>
<dbReference type="EMDB" id="EMD-3539"/>
<dbReference type="EMDB" id="EMD-3541"/>
<dbReference type="EMDB" id="EMD-3683"/>
<dbReference type="EMDB" id="EMD-3979"/>
<dbReference type="EMDB" id="EMD-4055"/>
<dbReference type="EMDB" id="EMD-4057"/>
<dbReference type="EMDB" id="EMD-4364"/>
<dbReference type="EMDB" id="EMD-43753"/>
<dbReference type="EMDB" id="EMD-47157"/>
<dbReference type="EMDB" id="EMD-6817"/>
<dbReference type="EMDB" id="EMD-6839"/>
<dbReference type="EMDB" id="EMD-6972"/>
<dbReference type="EMDB" id="EMD-6973"/>
<dbReference type="EMDB" id="EMD-6974"/>
<dbReference type="EMDB" id="EMD-7109"/>
<dbReference type="EMDB" id="EMD-8011"/>
<dbReference type="EMDB" id="EMD-8012"/>
<dbReference type="EMDB" id="EMD-8013"/>
<dbReference type="EMDB" id="EMD-8622"/>
<dbReference type="EMDB" id="EMD-9524"/>
<dbReference type="EMDB" id="EMD-9525"/>
<dbReference type="SMR" id="P43321"/>
<dbReference type="BioGRID" id="31416">
    <property type="interactions" value="96"/>
</dbReference>
<dbReference type="ComplexPortal" id="CPX-1651">
    <property type="entry name" value="PRP19-associated complex"/>
</dbReference>
<dbReference type="ComplexPortal" id="CPX-23">
    <property type="entry name" value="U1 small nuclear ribonucleoprotein complex"/>
</dbReference>
<dbReference type="ComplexPortal" id="CPX-25">
    <property type="entry name" value="U4/U6.U5 tri-small nuclear ribonucleoprotein complex"/>
</dbReference>
<dbReference type="ComplexPortal" id="CPX-26">
    <property type="entry name" value="U2 small nuclear ribonucleoprotein complex"/>
</dbReference>
<dbReference type="ComplexPortal" id="CPX-29">
    <property type="entry name" value="U5 small nuclear ribonucleoprotein complex"/>
</dbReference>
<dbReference type="ComplexPortal" id="CPX-30">
    <property type="entry name" value="U5 small nuclear ribonucleoprotein complex, AAR2 variant"/>
</dbReference>
<dbReference type="ComplexPortal" id="CPX-31">
    <property type="entry name" value="U4 small nuclear ribonucleoprotein complex"/>
</dbReference>
<dbReference type="ComplexPortal" id="CPX-32">
    <property type="entry name" value="U4/U6 small nuclear ribonucleoprotein complex"/>
</dbReference>
<dbReference type="ComplexPortal" id="CPX-43">
    <property type="entry name" value="Sm complex"/>
</dbReference>
<dbReference type="DIP" id="DIP-715N"/>
<dbReference type="FunCoup" id="P43321">
    <property type="interactions" value="1439"/>
</dbReference>
<dbReference type="IntAct" id="P43321">
    <property type="interactions" value="63"/>
</dbReference>
<dbReference type="MINT" id="P43321"/>
<dbReference type="STRING" id="4932.YLR147C"/>
<dbReference type="PaxDb" id="4932-YLR147C"/>
<dbReference type="PeptideAtlas" id="P43321"/>
<dbReference type="TopDownProteomics" id="P43321"/>
<dbReference type="EnsemblFungi" id="YLR147C_mRNA">
    <property type="protein sequence ID" value="YLR147C"/>
    <property type="gene ID" value="YLR147C"/>
</dbReference>
<dbReference type="GeneID" id="850839"/>
<dbReference type="KEGG" id="sce:YLR147C"/>
<dbReference type="AGR" id="SGD:S000004137"/>
<dbReference type="SGD" id="S000004137">
    <property type="gene designation" value="SMD3"/>
</dbReference>
<dbReference type="VEuPathDB" id="FungiDB:YLR147C"/>
<dbReference type="eggNOG" id="KOG3172">
    <property type="taxonomic scope" value="Eukaryota"/>
</dbReference>
<dbReference type="GeneTree" id="ENSGT00610000086153"/>
<dbReference type="HOGENOM" id="CLU_099537_1_2_1"/>
<dbReference type="InParanoid" id="P43321"/>
<dbReference type="OMA" id="HTITCET"/>
<dbReference type="OrthoDB" id="6425924at2759"/>
<dbReference type="BioCyc" id="YEAST:G3O-32283-MONOMER"/>
<dbReference type="BioGRID-ORCS" id="850839">
    <property type="hits" value="2 hits in 10 CRISPR screens"/>
</dbReference>
<dbReference type="EvolutionaryTrace" id="P43321"/>
<dbReference type="PRO" id="PR:P43321"/>
<dbReference type="Proteomes" id="UP000002311">
    <property type="component" value="Chromosome XII"/>
</dbReference>
<dbReference type="RNAct" id="P43321">
    <property type="molecule type" value="protein"/>
</dbReference>
<dbReference type="GO" id="GO:0071013">
    <property type="term" value="C:catalytic step 2 spliceosome"/>
    <property type="evidence" value="ECO:0000318"/>
    <property type="project" value="GO_Central"/>
</dbReference>
<dbReference type="GO" id="GO:0000243">
    <property type="term" value="C:commitment complex"/>
    <property type="evidence" value="ECO:0000353"/>
    <property type="project" value="SGD"/>
</dbReference>
<dbReference type="GO" id="GO:0005737">
    <property type="term" value="C:cytoplasm"/>
    <property type="evidence" value="ECO:0000303"/>
    <property type="project" value="ComplexPortal"/>
</dbReference>
<dbReference type="GO" id="GO:0005829">
    <property type="term" value="C:cytosol"/>
    <property type="evidence" value="ECO:0007669"/>
    <property type="project" value="UniProtKB-SubCell"/>
</dbReference>
<dbReference type="GO" id="GO:0005634">
    <property type="term" value="C:nucleus"/>
    <property type="evidence" value="ECO:0000303"/>
    <property type="project" value="ComplexPortal"/>
</dbReference>
<dbReference type="GO" id="GO:0071011">
    <property type="term" value="C:precatalytic spliceosome"/>
    <property type="evidence" value="ECO:0000318"/>
    <property type="project" value="GO_Central"/>
</dbReference>
<dbReference type="GO" id="GO:0000974">
    <property type="term" value="C:Prp19 complex"/>
    <property type="evidence" value="ECO:0000353"/>
    <property type="project" value="ComplexPortal"/>
</dbReference>
<dbReference type="GO" id="GO:0034719">
    <property type="term" value="C:SMN-Sm protein complex"/>
    <property type="evidence" value="ECO:0000318"/>
    <property type="project" value="GO_Central"/>
</dbReference>
<dbReference type="GO" id="GO:0005681">
    <property type="term" value="C:spliceosomal complex"/>
    <property type="evidence" value="ECO:0000303"/>
    <property type="project" value="ComplexPortal"/>
</dbReference>
<dbReference type="GO" id="GO:0097526">
    <property type="term" value="C:spliceosomal tri-snRNP complex"/>
    <property type="evidence" value="ECO:0000318"/>
    <property type="project" value="GO_Central"/>
</dbReference>
<dbReference type="GO" id="GO:0005685">
    <property type="term" value="C:U1 snRNP"/>
    <property type="evidence" value="ECO:0000314"/>
    <property type="project" value="SGD"/>
</dbReference>
<dbReference type="GO" id="GO:0005686">
    <property type="term" value="C:U2 snRNP"/>
    <property type="evidence" value="ECO:0000318"/>
    <property type="project" value="GO_Central"/>
</dbReference>
<dbReference type="GO" id="GO:0071004">
    <property type="term" value="C:U2-type prespliceosome"/>
    <property type="evidence" value="ECO:0000314"/>
    <property type="project" value="SGD"/>
</dbReference>
<dbReference type="GO" id="GO:0005687">
    <property type="term" value="C:U4 snRNP"/>
    <property type="evidence" value="ECO:0000353"/>
    <property type="project" value="ComplexPortal"/>
</dbReference>
<dbReference type="GO" id="GO:0071001">
    <property type="term" value="C:U4/U6 snRNP"/>
    <property type="evidence" value="ECO:0000303"/>
    <property type="project" value="ComplexPortal"/>
</dbReference>
<dbReference type="GO" id="GO:0046540">
    <property type="term" value="C:U4/U6 x U5 tri-snRNP complex"/>
    <property type="evidence" value="ECO:0000314"/>
    <property type="project" value="SGD"/>
</dbReference>
<dbReference type="GO" id="GO:0005682">
    <property type="term" value="C:U5 snRNP"/>
    <property type="evidence" value="ECO:0000314"/>
    <property type="project" value="SGD"/>
</dbReference>
<dbReference type="GO" id="GO:0003729">
    <property type="term" value="F:mRNA binding"/>
    <property type="evidence" value="ECO:0000353"/>
    <property type="project" value="SGD"/>
</dbReference>
<dbReference type="GO" id="GO:0003723">
    <property type="term" value="F:RNA binding"/>
    <property type="evidence" value="ECO:0000318"/>
    <property type="project" value="GO_Central"/>
</dbReference>
<dbReference type="GO" id="GO:0036261">
    <property type="term" value="P:7-methylguanosine cap hypermethylation"/>
    <property type="evidence" value="ECO:0000315"/>
    <property type="project" value="ComplexPortal"/>
</dbReference>
<dbReference type="GO" id="GO:0000395">
    <property type="term" value="P:mRNA 5'-splice site recognition"/>
    <property type="evidence" value="ECO:0000303"/>
    <property type="project" value="ComplexPortal"/>
</dbReference>
<dbReference type="GO" id="GO:0000398">
    <property type="term" value="P:mRNA splicing, via spliceosome"/>
    <property type="evidence" value="ECO:0000353"/>
    <property type="project" value="SGD"/>
</dbReference>
<dbReference type="GO" id="GO:0000245">
    <property type="term" value="P:spliceosomal complex assembly"/>
    <property type="evidence" value="ECO:0000303"/>
    <property type="project" value="ComplexPortal"/>
</dbReference>
<dbReference type="GO" id="GO:0000387">
    <property type="term" value="P:spliceosomal snRNP assembly"/>
    <property type="evidence" value="ECO:0000318"/>
    <property type="project" value="GO_Central"/>
</dbReference>
<dbReference type="GO" id="GO:1903241">
    <property type="term" value="P:U2-type prespliceosome assembly"/>
    <property type="evidence" value="ECO:0000303"/>
    <property type="project" value="ComplexPortal"/>
</dbReference>
<dbReference type="CDD" id="cd01721">
    <property type="entry name" value="Sm_D3"/>
    <property type="match status" value="1"/>
</dbReference>
<dbReference type="FunFam" id="2.30.30.100:FF:000002">
    <property type="entry name" value="Small nuclear ribonucleoprotein Sm D3"/>
    <property type="match status" value="1"/>
</dbReference>
<dbReference type="Gene3D" id="2.30.30.100">
    <property type="match status" value="1"/>
</dbReference>
<dbReference type="InterPro" id="IPR027141">
    <property type="entry name" value="LSm4/Sm_D1/D3"/>
</dbReference>
<dbReference type="InterPro" id="IPR010920">
    <property type="entry name" value="LSM_dom_sf"/>
</dbReference>
<dbReference type="InterPro" id="IPR047575">
    <property type="entry name" value="Sm"/>
</dbReference>
<dbReference type="InterPro" id="IPR001163">
    <property type="entry name" value="Sm_dom_euk/arc"/>
</dbReference>
<dbReference type="InterPro" id="IPR034099">
    <property type="entry name" value="SmD3"/>
</dbReference>
<dbReference type="PANTHER" id="PTHR23338">
    <property type="entry name" value="SMALL NUCLEAR RIBONUCLEOPROTEIN SM"/>
    <property type="match status" value="1"/>
</dbReference>
<dbReference type="Pfam" id="PF01423">
    <property type="entry name" value="LSM"/>
    <property type="match status" value="1"/>
</dbReference>
<dbReference type="SMART" id="SM00651">
    <property type="entry name" value="Sm"/>
    <property type="match status" value="1"/>
</dbReference>
<dbReference type="SUPFAM" id="SSF50182">
    <property type="entry name" value="Sm-like ribonucleoproteins"/>
    <property type="match status" value="1"/>
</dbReference>
<dbReference type="PROSITE" id="PS52002">
    <property type="entry name" value="SM"/>
    <property type="match status" value="1"/>
</dbReference>
<organism>
    <name type="scientific">Saccharomyces cerevisiae (strain ATCC 204508 / S288c)</name>
    <name type="common">Baker's yeast</name>
    <dbReference type="NCBI Taxonomy" id="559292"/>
    <lineage>
        <taxon>Eukaryota</taxon>
        <taxon>Fungi</taxon>
        <taxon>Dikarya</taxon>
        <taxon>Ascomycota</taxon>
        <taxon>Saccharomycotina</taxon>
        <taxon>Saccharomycetes</taxon>
        <taxon>Saccharomycetales</taxon>
        <taxon>Saccharomycetaceae</taxon>
        <taxon>Saccharomyces</taxon>
    </lineage>
</organism>
<evidence type="ECO:0000255" key="1">
    <source>
        <dbReference type="PROSITE-ProRule" id="PRU01346"/>
    </source>
</evidence>
<evidence type="ECO:0000269" key="2">
    <source>
    </source>
</evidence>
<evidence type="ECO:0000269" key="3">
    <source>
    </source>
</evidence>
<evidence type="ECO:0000269" key="4">
    <source>
    </source>
</evidence>
<evidence type="ECO:0000269" key="5">
    <source>
    </source>
</evidence>
<evidence type="ECO:0000269" key="6">
    <source>
    </source>
</evidence>
<evidence type="ECO:0000269" key="7">
    <source>
    </source>
</evidence>
<evidence type="ECO:0000305" key="8"/>
<evidence type="ECO:0007829" key="9">
    <source>
        <dbReference type="PDB" id="5GMK"/>
    </source>
</evidence>
<evidence type="ECO:0007829" key="10">
    <source>
        <dbReference type="PDB" id="9DTR"/>
    </source>
</evidence>